<feature type="signal peptide" evidence="1">
    <location>
        <begin position="1"/>
        <end position="18"/>
    </location>
</feature>
<feature type="chain" id="PRO_0000037204" description="Spike glycoprotein" evidence="1">
    <location>
        <begin position="19"/>
        <end position="1356"/>
    </location>
</feature>
<feature type="topological domain" description="Virion surface" evidence="1">
    <location>
        <begin position="19"/>
        <end position="1296"/>
    </location>
</feature>
<feature type="transmembrane region" description="Helical" evidence="1">
    <location>
        <begin position="1297"/>
        <end position="1316"/>
    </location>
</feature>
<feature type="topological domain" description="Intravirion" evidence="1">
    <location>
        <begin position="1317"/>
        <end position="1356"/>
    </location>
</feature>
<feature type="region of interest" description="S1">
    <location>
        <begin position="16"/>
        <end position="717"/>
    </location>
</feature>
<feature type="region of interest" description="S1" evidence="1">
    <location>
        <begin position="19"/>
        <end position="717"/>
    </location>
</feature>
<feature type="region of interest" description="Interaction with host ANPEP" evidence="1">
    <location>
        <begin position="598"/>
        <end position="728"/>
    </location>
</feature>
<feature type="region of interest" description="S2" evidence="1">
    <location>
        <begin position="718"/>
        <end position="1356"/>
    </location>
</feature>
<feature type="region of interest" description="Fusion peptide" evidence="1">
    <location>
        <begin position="934"/>
        <end position="954"/>
    </location>
</feature>
<feature type="region of interest" description="Heptad repeat 1 (HR1)" evidence="2">
    <location>
        <begin position="948"/>
        <end position="1067"/>
    </location>
</feature>
<feature type="region of interest" description="Heptad repeat 2 (HR2)" evidence="3">
    <location>
        <begin position="1212"/>
        <end position="1308"/>
    </location>
</feature>
<feature type="coiled-coil region" evidence="1">
    <location>
        <begin position="1015"/>
        <end position="1059"/>
    </location>
</feature>
<feature type="coiled-coil region" evidence="1">
    <location>
        <begin position="1244"/>
        <end position="1286"/>
    </location>
</feature>
<feature type="short sequence motif" description="KxHxx" evidence="1">
    <location>
        <begin position="1352"/>
        <end position="1356"/>
    </location>
</feature>
<feature type="glycosylation site" description="N-linked (GlcNAc) asparagine; by host" evidence="6">
    <location>
        <position position="35"/>
    </location>
</feature>
<feature type="glycosylation site" description="N-linked (GlcNAc) asparagine; by host" evidence="6">
    <location>
        <position position="52"/>
    </location>
</feature>
<feature type="glycosylation site" description="N-linked (GlcNAc) asparagine; by host" evidence="6">
    <location>
        <position position="98"/>
    </location>
</feature>
<feature type="glycosylation site" description="N-linked (GlcNAc) asparagine; by host" evidence="6">
    <location>
        <position position="155"/>
    </location>
</feature>
<feature type="glycosylation site" description="N-linked (GlcNAc) asparagine; by host" evidence="6">
    <location>
        <position position="187"/>
    </location>
</feature>
<feature type="glycosylation site" description="N-linked (GlcNAc) asparagine; by host" evidence="6">
    <location>
        <position position="193"/>
    </location>
</feature>
<feature type="glycosylation site" description="N-linked (GlcNAc) asparagine; by host" evidence="6">
    <location>
        <position position="240"/>
    </location>
</feature>
<feature type="glycosylation site" description="N-linked (GlcNAc) asparagine; by host" evidence="6">
    <location>
        <position position="276"/>
    </location>
</feature>
<feature type="glycosylation site" description="N-linked (GlcNAc) asparagine; by host" evidence="6">
    <location>
        <position position="301"/>
    </location>
</feature>
<feature type="glycosylation site" description="N-linked (GlcNAc) asparagine; by host" evidence="6">
    <location>
        <position position="330"/>
    </location>
</feature>
<feature type="glycosylation site" description="N-linked (GlcNAc) asparagine; by host" evidence="6">
    <location>
        <position position="354"/>
    </location>
</feature>
<feature type="glycosylation site" description="N-linked (GlcNAc) asparagine; by host" evidence="6">
    <location>
        <position position="358"/>
    </location>
</feature>
<feature type="glycosylation site" description="N-linked (GlcNAc) asparagine; by host" evidence="6">
    <location>
        <position position="403"/>
    </location>
</feature>
<feature type="glycosylation site" description="N-linked (GlcNAc) asparagine; by host" evidence="6">
    <location>
        <position position="426"/>
    </location>
</feature>
<feature type="glycosylation site" description="N-linked (GlcNAc...) asparagine; by host" evidence="5 6">
    <location>
        <position position="486"/>
    </location>
</feature>
<feature type="glycosylation site" description="N-linked (GlcNAc) asparagine; by host" evidence="6">
    <location>
        <position position="506"/>
    </location>
</feature>
<feature type="glycosylation site" description="N-linked (GlcNAc...) asparagine; by host" evidence="5 6">
    <location>
        <position position="512"/>
    </location>
</feature>
<feature type="glycosylation site" description="N-linked (GlcNAc) asparagine; by host" evidence="6">
    <location>
        <position position="626"/>
    </location>
</feature>
<feature type="glycosylation site" description="N-linked (GlcNAc) asparagine; by host" evidence="6">
    <location>
        <position position="645"/>
    </location>
</feature>
<feature type="glycosylation site" description="N-linked (GlcNAc) asparagine; by host" evidence="6">
    <location>
        <position position="666"/>
    </location>
</feature>
<feature type="glycosylation site" description="N-linked (GlcNAc) asparagine; by host" evidence="6">
    <location>
        <position position="699"/>
    </location>
</feature>
<feature type="glycosylation site" description="N-linked (GlcNAc) asparagine; by host" evidence="6">
    <location>
        <position position="723"/>
    </location>
</feature>
<feature type="glycosylation site" description="N-linked (GlcNAc) asparagine; by host" evidence="6">
    <location>
        <position position="749"/>
    </location>
</feature>
<feature type="glycosylation site" description="N-linked (GlcNAc) asparagine; by host" evidence="6">
    <location>
        <position position="762"/>
    </location>
</feature>
<feature type="glycosylation site" description="N-linked (GlcNAc) asparagine; by host" evidence="6">
    <location>
        <position position="768"/>
    </location>
</feature>
<feature type="glycosylation site" description="N-linked (GlcNAc) asparagine; by host" evidence="6">
    <location>
        <position position="1111"/>
    </location>
</feature>
<feature type="glycosylation site" description="N-linked (GlcNAc) asparagine; by host" evidence="6">
    <location>
        <position position="1196"/>
    </location>
</feature>
<feature type="glycosylation site" description="N-linked (GlcNAc) asparagine; by host" evidence="6">
    <location>
        <position position="1201"/>
    </location>
</feature>
<feature type="glycosylation site" description="N-linked (GlcNAc) asparagine; by host" evidence="6">
    <location>
        <position position="1218"/>
    </location>
</feature>
<feature type="glycosylation site" description="N-linked (GlcNAc) asparagine; by host" evidence="6">
    <location>
        <position position="1242"/>
    </location>
</feature>
<feature type="glycosylation site" description="N-linked (GlcNAc) asparagine; by host" evidence="6">
    <location>
        <position position="1247"/>
    </location>
</feature>
<feature type="glycosylation site" description="N-linked (GlcNAc) asparagine; by host" evidence="6">
    <location>
        <position position="1277"/>
    </location>
</feature>
<feature type="disulfide bond" evidence="6">
    <location>
        <begin position="106"/>
        <end position="126"/>
    </location>
</feature>
<feature type="disulfide bond" evidence="6">
    <location>
        <begin position="175"/>
        <end position="181"/>
    </location>
</feature>
<feature type="disulfide bond" evidence="6">
    <location>
        <begin position="207"/>
        <end position="210"/>
    </location>
</feature>
<feature type="disulfide bond" evidence="6">
    <location>
        <begin position="259"/>
        <end position="284"/>
    </location>
</feature>
<feature type="disulfide bond" evidence="6">
    <location>
        <begin position="328"/>
        <end position="351"/>
    </location>
</feature>
<feature type="disulfide bond" evidence="6">
    <location>
        <begin position="438"/>
        <end position="447"/>
    </location>
</feature>
<feature type="disulfide bond" evidence="5">
    <location>
        <begin position="497"/>
        <end position="500"/>
    </location>
</feature>
<feature type="disulfide bond" evidence="5 6">
    <location>
        <begin position="516"/>
        <end position="567"/>
    </location>
</feature>
<feature type="disulfide bond" evidence="5 6">
    <location>
        <begin position="550"/>
        <end position="577"/>
    </location>
</feature>
<feature type="disulfide bond" evidence="6">
    <location>
        <begin position="627"/>
        <end position="678"/>
    </location>
</feature>
<feature type="disulfide bond" evidence="6">
    <location>
        <begin position="724"/>
        <end position="737"/>
    </location>
</feature>
<feature type="disulfide bond" evidence="6">
    <location>
        <begin position="789"/>
        <end position="811"/>
    </location>
</feature>
<feature type="disulfide bond" evidence="6">
    <location>
        <begin position="794"/>
        <end position="800"/>
    </location>
</feature>
<feature type="disulfide bond" evidence="6">
    <location>
        <begin position="896"/>
        <end position="907"/>
    </location>
</feature>
<feature type="disulfide bond" evidence="6">
    <location>
        <begin position="1098"/>
        <end position="1109"/>
    </location>
</feature>
<feature type="sequence variant" description="In strain: Isolate BE03-40001 and Isolate NL.">
    <original>V</original>
    <variation>I</variation>
    <location>
        <position position="9"/>
    </location>
</feature>
<feature type="sequence variant" description="In strain: Isolate BE03-40001 and Isolate NL.">
    <original>A</original>
    <variation>V</variation>
    <location>
        <position position="13"/>
    </location>
</feature>
<feature type="sequence variant" description="In strain: Isolate BE03-40001 and Isolate NL.">
    <original>F</original>
    <variation>S</variation>
    <location>
        <position position="17"/>
    </location>
</feature>
<feature type="sequence variant" description="In strain: Isolate BE03-40001 and Isolate NL.">
    <original>NL</original>
    <variation>SI</variation>
    <location>
        <begin position="24"/>
        <end position="25"/>
    </location>
</feature>
<feature type="sequence variant" description="In strain: Isolate BE03-40001 and Isolate NL.">
    <original>T</original>
    <variation>V</variation>
    <location>
        <position position="46"/>
    </location>
</feature>
<feature type="sequence variant" description="In strain: Isolate BE03-1153, Isolate BE03-40001, Isolate BE03-64880 and Isolate NL.">
    <original>F</original>
    <variation>I</variation>
    <location>
        <position position="49"/>
    </location>
</feature>
<feature type="sequence variant" description="In strain: Isolate BE03-40001 and Isolate NL.">
    <original>VYS</original>
    <variation>SYP</variation>
    <location>
        <begin position="57"/>
        <end position="59"/>
    </location>
</feature>
<feature type="sequence variant" description="In strain: Isolate BE03-40001 and Isolate NL.">
    <original>N</original>
    <variation>K</variation>
    <location>
        <position position="70"/>
    </location>
</feature>
<feature type="sequence variant" description="In strain: Isolate BE03-40001 and Isolate NL.">
    <original>T</original>
    <variation>S</variation>
    <location>
        <position position="79"/>
    </location>
</feature>
<feature type="sequence variant" description="In strain: Isolate BE03-1153 and Isolate BE03-64880.">
    <original>A</original>
    <variation>V</variation>
    <location>
        <position position="84"/>
    </location>
</feature>
<feature type="sequence variant" description="In strain: Isolate BE03-40001 and Isolate NL.">
    <original>V</original>
    <variation>L</variation>
    <location>
        <position position="91"/>
    </location>
</feature>
<feature type="sequence variant" description="In strain: Isolate BE03-40001 and Isolate NL.">
    <original>EIG</original>
    <variation>KIH</variation>
    <location>
        <begin position="94"/>
        <end position="96"/>
    </location>
</feature>
<feature type="sequence variant" description="In strain: Isolate BE03-40001 and Isolate NL.">
    <original>S</original>
    <variation>P</variation>
    <location>
        <position position="100"/>
    </location>
</feature>
<feature type="sequence variant" description="In strain: Isolate BE03-1153 and Isolate BE03-64880 and Isolate NL.">
    <original>SR</original>
    <variation>GI</variation>
    <location>
        <begin position="109"/>
        <end position="110"/>
    </location>
</feature>
<feature type="sequence variant" description="In strain: Isolate BE03-40001 and Isolate NL.">
    <original>S</original>
    <variation>G</variation>
    <location>
        <position position="109"/>
    </location>
</feature>
<feature type="sequence variant" description="In strain: Isolate BE03-40001 and Isolate NL.">
    <location>
        <position position="110"/>
    </location>
</feature>
<feature type="sequence variant" description="In strain: Isolate BE03-40001 and Isolate NL.">
    <original>T</original>
    <variation>S</variation>
    <location>
        <position position="113"/>
    </location>
</feature>
<feature type="sequence variant" description="In strain: Isolate BE03-40001 and Isolate NL.">
    <original>ASSSF</original>
    <variation>VSTSH</variation>
    <location>
        <begin position="120"/>
        <end position="124"/>
    </location>
</feature>
<feature type="sequence variant" description="In strain: Isolate BE03-40001.">
    <original>D</original>
    <variation>H</variation>
    <location>
        <position position="125"/>
    </location>
</feature>
<feature type="sequence variant" description="In strain: Isolate BE03-40001.">
    <original>L</original>
    <variation>S</variation>
    <location>
        <position position="130"/>
    </location>
</feature>
<feature type="sequence variant" description="In strain: Isolate BE03-40001 and Isolate NL.">
    <original>L</original>
    <variation>S</variation>
    <location>
        <position position="131"/>
    </location>
</feature>
<feature type="sequence variant" description="In strain: Isolate BE03-40001 and Isolate NL.">
    <original>A</original>
    <variation>V</variation>
    <location>
        <position position="138"/>
    </location>
</feature>
<feature type="sequence variant" description="In strain: Isolate BE03-40001 and Isolate NL.">
    <original>V</original>
    <variation>A</variation>
    <location>
        <position position="156"/>
    </location>
</feature>
<feature type="sequence variant" description="In strain: Isolate BE03-40001 and Isolate NL.">
    <original>NY</original>
    <variation>SE</variation>
    <location>
        <begin position="178"/>
        <end position="179"/>
    </location>
</feature>
<feature type="sequence variant" description="In strain: Isolate NL.">
    <original>V</original>
    <variation>I</variation>
    <location>
        <position position="190"/>
    </location>
</feature>
<feature type="sequence variant" description="In strain: Isolate NL.">
    <original>H</original>
    <variation>L</variation>
    <location>
        <position position="197"/>
    </location>
</feature>
<feature type="sequence variant" description="In strain: Isolate NL.">
    <original>V</original>
    <variation>I</variation>
    <location>
        <position position="201"/>
    </location>
</feature>
<feature type="sequence variant" description="In strain: Isolate NL.">
    <original>V</original>
    <variation>A</variation>
    <location>
        <position position="293"/>
    </location>
</feature>
<feature type="sequence variant" description="In strain: Isolate NL.">
    <original>F</original>
    <variation>L</variation>
    <location>
        <position position="302"/>
    </location>
</feature>
<feature type="sequence variant" description="In strain: Isolate NL.">
    <original>L</original>
    <variation>V</variation>
    <location>
        <position position="307"/>
    </location>
</feature>
<feature type="sequence variant" description="In strain: Isolate NL.">
    <original>H</original>
    <variation>R</variation>
    <location>
        <position position="503"/>
    </location>
</feature>
<feature type="sequence variant" description="In strain: Isolate NL.">
    <original>T</original>
    <variation>I</variation>
    <location>
        <position position="730"/>
    </location>
</feature>
<feature type="sequence variant" description="In strain: Isolate NL.">
    <original>R</original>
    <variation>H</variation>
    <location>
        <position position="863"/>
    </location>
</feature>
<feature type="sequence variant" description="In strain: Isolate NL.">
    <original>Q</original>
    <variation>H</variation>
    <location>
        <position position="999"/>
    </location>
</feature>
<feature type="sequence variant" description="In strain: Isolate NL.">
    <original>Q</original>
    <variation>H</variation>
    <location>
        <position position="1044"/>
    </location>
</feature>
<feature type="helix" evidence="12">
    <location>
        <begin position="27"/>
        <end position="30"/>
    </location>
</feature>
<feature type="strand" evidence="12">
    <location>
        <begin position="34"/>
        <end position="43"/>
    </location>
</feature>
<feature type="strand" evidence="12">
    <location>
        <begin position="55"/>
        <end position="59"/>
    </location>
</feature>
<feature type="strand" evidence="12">
    <location>
        <begin position="61"/>
        <end position="66"/>
    </location>
</feature>
<feature type="strand" evidence="12">
    <location>
        <begin position="69"/>
        <end position="71"/>
    </location>
</feature>
<feature type="strand" evidence="12">
    <location>
        <begin position="73"/>
        <end position="78"/>
    </location>
</feature>
<feature type="strand" evidence="12">
    <location>
        <begin position="88"/>
        <end position="108"/>
    </location>
</feature>
<feature type="strand" evidence="12">
    <location>
        <begin position="123"/>
        <end position="134"/>
    </location>
</feature>
<feature type="strand" evidence="12">
    <location>
        <begin position="139"/>
        <end position="145"/>
    </location>
</feature>
<feature type="strand" evidence="12">
    <location>
        <begin position="148"/>
        <end position="153"/>
    </location>
</feature>
<feature type="strand" evidence="12">
    <location>
        <begin position="156"/>
        <end position="161"/>
    </location>
</feature>
<feature type="helix" evidence="12">
    <location>
        <begin position="165"/>
        <end position="167"/>
    </location>
</feature>
<feature type="strand" evidence="12">
    <location>
        <begin position="170"/>
        <end position="174"/>
    </location>
</feature>
<feature type="helix" evidence="12">
    <location>
        <begin position="177"/>
        <end position="179"/>
    </location>
</feature>
<feature type="strand" evidence="12">
    <location>
        <begin position="182"/>
        <end position="186"/>
    </location>
</feature>
<feature type="strand" evidence="12">
    <location>
        <begin position="190"/>
        <end position="197"/>
    </location>
</feature>
<feature type="strand" evidence="12">
    <location>
        <begin position="200"/>
        <end position="206"/>
    </location>
</feature>
<feature type="helix" evidence="12">
    <location>
        <begin position="213"/>
        <end position="216"/>
    </location>
</feature>
<feature type="helix" evidence="12">
    <location>
        <begin position="222"/>
        <end position="224"/>
    </location>
</feature>
<feature type="strand" evidence="12">
    <location>
        <begin position="239"/>
        <end position="241"/>
    </location>
</feature>
<feature type="strand" evidence="12">
    <location>
        <begin position="246"/>
        <end position="263"/>
    </location>
</feature>
<feature type="strand" evidence="12">
    <location>
        <begin position="275"/>
        <end position="277"/>
    </location>
</feature>
<feature type="strand" evidence="12">
    <location>
        <begin position="294"/>
        <end position="300"/>
    </location>
</feature>
<feature type="helix" evidence="12">
    <location>
        <begin position="306"/>
        <end position="308"/>
    </location>
</feature>
<feature type="strand" evidence="12">
    <location>
        <begin position="310"/>
        <end position="318"/>
    </location>
</feature>
<feature type="strand" evidence="12">
    <location>
        <begin position="323"/>
        <end position="332"/>
    </location>
</feature>
<feature type="helix" evidence="12">
    <location>
        <begin position="334"/>
        <end position="336"/>
    </location>
</feature>
<feature type="strand" evidence="12">
    <location>
        <begin position="339"/>
        <end position="341"/>
    </location>
</feature>
<feature type="strand" evidence="12">
    <location>
        <begin position="350"/>
        <end position="357"/>
    </location>
</feature>
<feature type="strand" evidence="12">
    <location>
        <begin position="360"/>
        <end position="368"/>
    </location>
</feature>
<feature type="strand" evidence="12">
    <location>
        <begin position="371"/>
        <end position="373"/>
    </location>
</feature>
<feature type="strand" evidence="12">
    <location>
        <begin position="375"/>
        <end position="379"/>
    </location>
</feature>
<feature type="strand" evidence="12">
    <location>
        <begin position="382"/>
        <end position="386"/>
    </location>
</feature>
<feature type="strand" evidence="12">
    <location>
        <begin position="389"/>
        <end position="393"/>
    </location>
</feature>
<feature type="strand" evidence="12">
    <location>
        <begin position="398"/>
        <end position="404"/>
    </location>
</feature>
<feature type="strand" evidence="12">
    <location>
        <begin position="407"/>
        <end position="409"/>
    </location>
</feature>
<feature type="strand" evidence="12">
    <location>
        <begin position="412"/>
        <end position="428"/>
    </location>
</feature>
<feature type="strand" evidence="12">
    <location>
        <begin position="431"/>
        <end position="437"/>
    </location>
</feature>
<feature type="helix" evidence="12">
    <location>
        <begin position="441"/>
        <end position="449"/>
    </location>
</feature>
<feature type="strand" evidence="12">
    <location>
        <begin position="456"/>
        <end position="461"/>
    </location>
</feature>
<feature type="strand" evidence="12">
    <location>
        <begin position="471"/>
        <end position="474"/>
    </location>
</feature>
<feature type="strand" evidence="13">
    <location>
        <begin position="482"/>
        <end position="492"/>
    </location>
</feature>
<feature type="strand" evidence="13">
    <location>
        <begin position="495"/>
        <end position="497"/>
    </location>
</feature>
<feature type="turn" evidence="13">
    <location>
        <begin position="498"/>
        <end position="500"/>
    </location>
</feature>
<feature type="strand" evidence="13">
    <location>
        <begin position="503"/>
        <end position="509"/>
    </location>
</feature>
<feature type="strand" evidence="13">
    <location>
        <begin position="512"/>
        <end position="516"/>
    </location>
</feature>
<feature type="strand" evidence="13">
    <location>
        <begin position="519"/>
        <end position="530"/>
    </location>
</feature>
<feature type="turn" evidence="13">
    <location>
        <begin position="536"/>
        <end position="539"/>
    </location>
</feature>
<feature type="strand" evidence="13">
    <location>
        <begin position="540"/>
        <end position="545"/>
    </location>
</feature>
<feature type="strand" evidence="13">
    <location>
        <begin position="549"/>
        <end position="551"/>
    </location>
</feature>
<feature type="helix" evidence="13">
    <location>
        <begin position="554"/>
        <end position="557"/>
    </location>
</feature>
<feature type="turn" evidence="13">
    <location>
        <begin position="558"/>
        <end position="560"/>
    </location>
</feature>
<feature type="strand" evidence="13">
    <location>
        <begin position="562"/>
        <end position="571"/>
    </location>
</feature>
<feature type="strand" evidence="13">
    <location>
        <begin position="577"/>
        <end position="585"/>
    </location>
</feature>
<feature type="strand" evidence="13">
    <location>
        <begin position="588"/>
        <end position="608"/>
    </location>
</feature>
<feature type="strand" evidence="12">
    <location>
        <begin position="628"/>
        <end position="632"/>
    </location>
</feature>
<feature type="strand" evidence="12">
    <location>
        <begin position="635"/>
        <end position="644"/>
    </location>
</feature>
<feature type="strand" evidence="12">
    <location>
        <begin position="652"/>
        <end position="655"/>
    </location>
</feature>
<feature type="strand" evidence="12">
    <location>
        <begin position="661"/>
        <end position="665"/>
    </location>
</feature>
<feature type="strand" evidence="12">
    <location>
        <begin position="672"/>
        <end position="676"/>
    </location>
</feature>
<feature type="strand" evidence="12">
    <location>
        <begin position="682"/>
        <end position="687"/>
    </location>
</feature>
<feature type="strand" evidence="12">
    <location>
        <begin position="690"/>
        <end position="700"/>
    </location>
</feature>
<feature type="strand" evidence="12">
    <location>
        <begin position="707"/>
        <end position="711"/>
    </location>
</feature>
<feature type="strand" evidence="12">
    <location>
        <begin position="714"/>
        <end position="719"/>
    </location>
</feature>
<feature type="strand" evidence="12">
    <location>
        <begin position="727"/>
        <end position="731"/>
    </location>
</feature>
<feature type="strand" evidence="12">
    <location>
        <begin position="734"/>
        <end position="737"/>
    </location>
</feature>
<feature type="strand" evidence="12">
    <location>
        <begin position="742"/>
        <end position="744"/>
    </location>
</feature>
<feature type="strand" evidence="12">
    <location>
        <begin position="758"/>
        <end position="779"/>
    </location>
</feature>
<feature type="strand" evidence="12">
    <location>
        <begin position="785"/>
        <end position="787"/>
    </location>
</feature>
<feature type="turn" evidence="12">
    <location>
        <begin position="789"/>
        <end position="793"/>
    </location>
</feature>
<feature type="helix" evidence="12">
    <location>
        <begin position="800"/>
        <end position="803"/>
    </location>
</feature>
<feature type="helix" evidence="12">
    <location>
        <begin position="804"/>
        <end position="807"/>
    </location>
</feature>
<feature type="helix" evidence="12">
    <location>
        <begin position="808"/>
        <end position="832"/>
    </location>
</feature>
<feature type="helix" evidence="12">
    <location>
        <begin position="837"/>
        <end position="842"/>
    </location>
</feature>
<feature type="helix" evidence="12">
    <location>
        <begin position="845"/>
        <end position="847"/>
    </location>
</feature>
<feature type="helix" evidence="12">
    <location>
        <begin position="849"/>
        <end position="851"/>
    </location>
</feature>
<feature type="turn" evidence="12">
    <location>
        <begin position="854"/>
        <end position="856"/>
    </location>
</feature>
<feature type="strand" evidence="12">
    <location>
        <begin position="863"/>
        <end position="865"/>
    </location>
</feature>
<feature type="helix" evidence="12">
    <location>
        <begin position="872"/>
        <end position="881"/>
    </location>
</feature>
<feature type="helix" evidence="12">
    <location>
        <begin position="893"/>
        <end position="897"/>
    </location>
</feature>
<feature type="helix" evidence="12">
    <location>
        <begin position="905"/>
        <end position="910"/>
    </location>
</feature>
<feature type="turn" evidence="12">
    <location>
        <begin position="911"/>
        <end position="913"/>
    </location>
</feature>
<feature type="strand" evidence="12">
    <location>
        <begin position="914"/>
        <end position="916"/>
    </location>
</feature>
<feature type="helix" evidence="12">
    <location>
        <begin position="923"/>
        <end position="935"/>
    </location>
</feature>
<feature type="turn" evidence="12">
    <location>
        <begin position="936"/>
        <end position="938"/>
    </location>
</feature>
<feature type="strand" evidence="12">
    <location>
        <begin position="941"/>
        <end position="943"/>
    </location>
</feature>
<feature type="helix" evidence="12">
    <location>
        <begin position="950"/>
        <end position="959"/>
    </location>
</feature>
<feature type="helix" evidence="11">
    <location>
        <begin position="983"/>
        <end position="1029"/>
    </location>
</feature>
<feature type="helix" evidence="12">
    <location>
        <begin position="1031"/>
        <end position="1033"/>
    </location>
</feature>
<feature type="strand" evidence="12">
    <location>
        <begin position="1037"/>
        <end position="1039"/>
    </location>
</feature>
<feature type="helix" evidence="12">
    <location>
        <begin position="1043"/>
        <end position="1047"/>
    </location>
</feature>
<feature type="helix" evidence="12">
    <location>
        <begin position="1052"/>
        <end position="1098"/>
    </location>
</feature>
<feature type="turn" evidence="12">
    <location>
        <begin position="1099"/>
        <end position="1101"/>
    </location>
</feature>
<feature type="strand" evidence="12">
    <location>
        <begin position="1108"/>
        <end position="1122"/>
    </location>
</feature>
<feature type="strand" evidence="12">
    <location>
        <begin position="1125"/>
        <end position="1145"/>
    </location>
</feature>
<feature type="strand" evidence="12">
    <location>
        <begin position="1147"/>
        <end position="1149"/>
    </location>
</feature>
<feature type="turn" evidence="12">
    <location>
        <begin position="1150"/>
        <end position="1152"/>
    </location>
</feature>
<feature type="strand" evidence="12">
    <location>
        <begin position="1153"/>
        <end position="1159"/>
    </location>
</feature>
<feature type="strand" evidence="12">
    <location>
        <begin position="1162"/>
        <end position="1167"/>
    </location>
</feature>
<feature type="strand" evidence="12">
    <location>
        <begin position="1170"/>
        <end position="1178"/>
    </location>
</feature>
<feature type="helix" evidence="12">
    <location>
        <begin position="1186"/>
        <end position="1188"/>
    </location>
</feature>
<feature type="strand" evidence="12">
    <location>
        <begin position="1189"/>
        <end position="1191"/>
    </location>
</feature>
<feature type="strand" evidence="12">
    <location>
        <begin position="1197"/>
        <end position="1202"/>
    </location>
</feature>
<feature type="helix" evidence="12">
    <location>
        <begin position="1206"/>
        <end position="1209"/>
    </location>
</feature>
<feature type="helix" evidence="12">
    <location>
        <begin position="1217"/>
        <end position="1223"/>
    </location>
</feature>
<feature type="helix" evidence="11">
    <location>
        <begin position="1249"/>
        <end position="1278"/>
    </location>
</feature>
<organism>
    <name type="scientific">Human coronavirus NL63</name>
    <name type="common">HCoV-NL63</name>
    <dbReference type="NCBI Taxonomy" id="277944"/>
    <lineage>
        <taxon>Viruses</taxon>
        <taxon>Riboviria</taxon>
        <taxon>Orthornavirae</taxon>
        <taxon>Pisuviricota</taxon>
        <taxon>Pisoniviricetes</taxon>
        <taxon>Nidovirales</taxon>
        <taxon>Cornidovirineae</taxon>
        <taxon>Coronaviridae</taxon>
        <taxon>Orthocoronavirinae</taxon>
        <taxon>Alphacoronavirus</taxon>
        <taxon>Setracovirus</taxon>
    </lineage>
</organism>
<gene>
    <name evidence="1" type="primary">S</name>
    <name type="ORF">2</name>
</gene>
<dbReference type="EMBL" id="AY567487">
    <property type="protein sequence ID" value="AAS58177.1"/>
    <property type="molecule type" value="Genomic_RNA"/>
</dbReference>
<dbReference type="EMBL" id="AY518894">
    <property type="protein sequence ID" value="AAS89767.1"/>
    <property type="molecule type" value="Genomic_RNA"/>
</dbReference>
<dbReference type="EMBL" id="AY758297">
    <property type="protein sequence ID" value="AAW66968.1"/>
    <property type="status" value="ALT_TERM"/>
    <property type="molecule type" value="Genomic_RNA"/>
</dbReference>
<dbReference type="EMBL" id="AY758298">
    <property type="protein sequence ID" value="AAW66969.1"/>
    <property type="status" value="ALT_TERM"/>
    <property type="molecule type" value="Genomic_RNA"/>
</dbReference>
<dbReference type="EMBL" id="AY758300">
    <property type="protein sequence ID" value="AAW66970.1"/>
    <property type="status" value="ALT_TERM"/>
    <property type="molecule type" value="Genomic_RNA"/>
</dbReference>
<dbReference type="EMBL" id="AY758301">
    <property type="protein sequence ID" value="AAW66971.1"/>
    <property type="status" value="ALT_TERM"/>
    <property type="molecule type" value="Genomic_RNA"/>
</dbReference>
<dbReference type="RefSeq" id="YP_003767.1">
    <property type="nucleotide sequence ID" value="NC_005831.2"/>
</dbReference>
<dbReference type="PDB" id="2IEQ">
    <property type="method" value="X-ray"/>
    <property type="resolution" value="1.75 A"/>
    <property type="chains" value="A/B/C=981-1037, A/B/C=1242-1283"/>
</dbReference>
<dbReference type="PDB" id="3KBH">
    <property type="method" value="X-ray"/>
    <property type="resolution" value="3.31 A"/>
    <property type="chains" value="E/F/G/H=481-616"/>
</dbReference>
<dbReference type="PDB" id="5SZS">
    <property type="method" value="EM"/>
    <property type="resolution" value="3.40 A"/>
    <property type="chains" value="A/B/C=16-1291"/>
</dbReference>
<dbReference type="PDB" id="7FC3">
    <property type="method" value="X-ray"/>
    <property type="resolution" value="3.19 A"/>
    <property type="chains" value="E=481-611"/>
</dbReference>
<dbReference type="PDB" id="7KIP">
    <property type="method" value="EM"/>
    <property type="resolution" value="3.39 A"/>
    <property type="chains" value="A/B/C=1-1356"/>
</dbReference>
<dbReference type="PDB" id="8FR7">
    <property type="method" value="EM"/>
    <property type="resolution" value="3.39 A"/>
    <property type="chains" value="A/B/C=1-1356"/>
</dbReference>
<dbReference type="PDBsum" id="2IEQ"/>
<dbReference type="PDBsum" id="3KBH"/>
<dbReference type="PDBsum" id="5SZS"/>
<dbReference type="PDBsum" id="7FC3"/>
<dbReference type="PDBsum" id="7KIP"/>
<dbReference type="PDBsum" id="8FR7"/>
<dbReference type="EMDB" id="EMD-22889"/>
<dbReference type="EMDB" id="EMD-8331"/>
<dbReference type="SMR" id="Q6Q1S2"/>
<dbReference type="DIP" id="DIP-49012N"/>
<dbReference type="IntAct" id="Q6Q1S2">
    <property type="interactions" value="2"/>
</dbReference>
<dbReference type="GlyCosmos" id="Q6Q1S2">
    <property type="glycosylation" value="32 sites, No reported glycans"/>
</dbReference>
<dbReference type="iPTMnet" id="Q6Q1S2"/>
<dbReference type="ABCD" id="Q6Q1S2">
    <property type="antibodies" value="6 sequenced antibodies"/>
</dbReference>
<dbReference type="DNASU" id="2943499"/>
<dbReference type="KEGG" id="vg:2943499"/>
<dbReference type="SABIO-RK" id="Q6Q1S2"/>
<dbReference type="EvolutionaryTrace" id="Q6Q1S2"/>
<dbReference type="Proteomes" id="UP000008573">
    <property type="component" value="Genome"/>
</dbReference>
<dbReference type="Proteomes" id="UP000161757">
    <property type="component" value="Segment"/>
</dbReference>
<dbReference type="GO" id="GO:0044173">
    <property type="term" value="C:host cell endoplasmic reticulum-Golgi intermediate compartment membrane"/>
    <property type="evidence" value="ECO:0007669"/>
    <property type="project" value="UniProtKB-SubCell"/>
</dbReference>
<dbReference type="GO" id="GO:0016020">
    <property type="term" value="C:membrane"/>
    <property type="evidence" value="ECO:0007669"/>
    <property type="project" value="UniProtKB-UniRule"/>
</dbReference>
<dbReference type="GO" id="GO:0019031">
    <property type="term" value="C:viral envelope"/>
    <property type="evidence" value="ECO:0007669"/>
    <property type="project" value="UniProtKB-UniRule"/>
</dbReference>
<dbReference type="GO" id="GO:0055036">
    <property type="term" value="C:virion membrane"/>
    <property type="evidence" value="ECO:0007669"/>
    <property type="project" value="UniProtKB-SubCell"/>
</dbReference>
<dbReference type="GO" id="GO:0046789">
    <property type="term" value="F:host cell surface receptor binding"/>
    <property type="evidence" value="ECO:0000353"/>
    <property type="project" value="BHF-UCL"/>
</dbReference>
<dbReference type="GO" id="GO:0075509">
    <property type="term" value="P:endocytosis involved in viral entry into host cell"/>
    <property type="evidence" value="ECO:0007669"/>
    <property type="project" value="UniProtKB-UniRule"/>
</dbReference>
<dbReference type="GO" id="GO:0039654">
    <property type="term" value="P:fusion of virus membrane with host endosome membrane"/>
    <property type="evidence" value="ECO:0007669"/>
    <property type="project" value="UniProtKB-UniRule"/>
</dbReference>
<dbReference type="GO" id="GO:0019064">
    <property type="term" value="P:fusion of virus membrane with host plasma membrane"/>
    <property type="evidence" value="ECO:0007669"/>
    <property type="project" value="UniProtKB-UniRule"/>
</dbReference>
<dbReference type="GO" id="GO:0046813">
    <property type="term" value="P:receptor-mediated virion attachment to host cell"/>
    <property type="evidence" value="ECO:0000314"/>
    <property type="project" value="BHF-UCL"/>
</dbReference>
<dbReference type="CDD" id="cd22375">
    <property type="entry name" value="HCoV-NL63-229E-like_Spike_SD1-2_S1-S2_S2"/>
    <property type="match status" value="1"/>
</dbReference>
<dbReference type="Gene3D" id="1.20.5.300">
    <property type="match status" value="2"/>
</dbReference>
<dbReference type="Gene3D" id="2.60.40.3130">
    <property type="match status" value="1"/>
</dbReference>
<dbReference type="HAMAP" id="MF_04200">
    <property type="entry name" value="ALPHA_CORONA_SPIKE"/>
    <property type="match status" value="1"/>
</dbReference>
<dbReference type="InterPro" id="IPR042552">
    <property type="entry name" value="ALPHA_CORONA_SPIKE"/>
</dbReference>
<dbReference type="InterPro" id="IPR043607">
    <property type="entry name" value="CoV_S1_C"/>
</dbReference>
<dbReference type="InterPro" id="IPR043473">
    <property type="entry name" value="S2_sf_CoV"/>
</dbReference>
<dbReference type="InterPro" id="IPR002551">
    <property type="entry name" value="Spike_S1_CoV"/>
</dbReference>
<dbReference type="InterPro" id="IPR002552">
    <property type="entry name" value="Spike_S2_CoV"/>
</dbReference>
<dbReference type="InterPro" id="IPR043614">
    <property type="entry name" value="Spike_S2_CoV_C"/>
</dbReference>
<dbReference type="InterPro" id="IPR044873">
    <property type="entry name" value="Spike_S2_CoV_HR1"/>
</dbReference>
<dbReference type="InterPro" id="IPR044874">
    <property type="entry name" value="Spike_S2_CoV_HR2"/>
</dbReference>
<dbReference type="Pfam" id="PF01600">
    <property type="entry name" value="CoV_S1"/>
    <property type="match status" value="1"/>
</dbReference>
<dbReference type="Pfam" id="PF19209">
    <property type="entry name" value="CoV_S1_C"/>
    <property type="match status" value="1"/>
</dbReference>
<dbReference type="Pfam" id="PF01601">
    <property type="entry name" value="CoV_S2"/>
    <property type="match status" value="1"/>
</dbReference>
<dbReference type="Pfam" id="PF19214">
    <property type="entry name" value="CoV_S2_C"/>
    <property type="match status" value="1"/>
</dbReference>
<dbReference type="SUPFAM" id="SSF111474">
    <property type="entry name" value="Coronavirus S2 glycoprotein"/>
    <property type="match status" value="2"/>
</dbReference>
<dbReference type="PROSITE" id="PS51923">
    <property type="entry name" value="COV_S2_HR1"/>
    <property type="match status" value="1"/>
</dbReference>
<dbReference type="PROSITE" id="PS51924">
    <property type="entry name" value="COV_S2_HR2"/>
    <property type="match status" value="1"/>
</dbReference>
<protein>
    <recommendedName>
        <fullName evidence="1">Spike glycoprotein</fullName>
        <shortName evidence="1">S glycoprotein</shortName>
    </recommendedName>
    <alternativeName>
        <fullName evidence="1">E2</fullName>
    </alternativeName>
    <alternativeName>
        <fullName evidence="1">Peplomer protein</fullName>
    </alternativeName>
</protein>
<reference key="1">
    <citation type="journal article" date="2004" name="Nat. Med.">
        <title>Identification of a new human coronavirus.</title>
        <authorList>
            <person name="Van Der Hoek L."/>
            <person name="Pyrc K."/>
            <person name="Jebbink M.F."/>
            <person name="Vermeulen-Oost W."/>
            <person name="Berkhout R.J."/>
            <person name="Wolthers K.C."/>
            <person name="Wertheim-Van Dillen P.M."/>
            <person name="Kaandorp J."/>
            <person name="Spaargaren J."/>
            <person name="Berkhout B."/>
        </authorList>
    </citation>
    <scope>NUCLEOTIDE SEQUENCE [GENOMIC RNA]</scope>
</reference>
<reference key="2">
    <citation type="submission" date="2004-06" db="EMBL/GenBank/DDBJ databases">
        <authorList>
            <person name="van der Hoek L."/>
            <person name="Pyrc K."/>
            <person name="Jebbink M.F."/>
            <person name="Vermeulen-Oost W."/>
            <person name="Berkhout R.J.M."/>
            <person name="Wolthers K.C."/>
            <person name="Wertheim-van Dillen P.M.E."/>
            <person name="Kaandorp J."/>
            <person name="Spaargaren J."/>
            <person name="Berkhout B."/>
        </authorList>
    </citation>
    <scope>NUCLEOTIDE SEQUENCE [GENOMIC RNA]</scope>
</reference>
<reference key="3">
    <citation type="journal article" date="2004" name="Proc. Natl. Acad. Sci. U.S.A.">
        <title>A previously undescribed coronavirus associated with respiratory disease in humans.</title>
        <authorList>
            <person name="Fouchier R.A."/>
            <person name="Hartwig N.G."/>
            <person name="Bestebroer T.M."/>
            <person name="Niemeyer B."/>
            <person name="De Jong J.C."/>
            <person name="Simon J.H."/>
            <person name="Osterhaus A.D."/>
        </authorList>
    </citation>
    <scope>NUCLEOTIDE SEQUENCE [GENOMIC RNA]</scope>
    <source>
        <strain>Isolate NL</strain>
    </source>
</reference>
<reference key="4">
    <citation type="submission" date="2004-01" db="EMBL/GenBank/DDBJ databases">
        <authorList>
            <person name="Fouchier R.A.M."/>
            <person name="Bestebroer T.M."/>
            <person name="de Jong J.C."/>
            <person name="Niemeyer B."/>
            <person name="Simon J.H."/>
            <person name="Osterhaus A.D.M.E."/>
        </authorList>
    </citation>
    <scope>NUCLEOTIDE SEQUENCE [GENOMIC RNA]</scope>
    <source>
        <strain>Isolate NL</strain>
    </source>
</reference>
<reference key="5">
    <citation type="submission" date="2004-09" db="EMBL/GenBank/DDBJ databases">
        <authorList>
            <person name="Moes E."/>
            <person name="Vijgen L."/>
            <person name="Keyaerts E."/>
            <person name="Zlateva K."/>
            <person name="Meurs M."/>
            <person name="Pyrc K."/>
            <person name="Berkhout B."/>
            <person name="van der Hoek L."/>
            <person name="Van Ranst M."/>
        </authorList>
    </citation>
    <scope>NUCLEOTIDE SEQUENCE [GENOMIC RNA] OF 1-193</scope>
    <source>
        <strain>Isolate BE03-1153</strain>
        <strain>Isolate BE03-21596</strain>
        <strain>Isolate BE03-40001</strain>
        <strain>Isolate BE03-64880</strain>
    </source>
</reference>
<reference key="6">
    <citation type="journal article" date="2005" name="Proc. Natl. Acad. Sci. U.S.A.">
        <title>Human coronavirus NL63 employs the severe acute respiratory syndrome coronavirus receptor for cellular entry.</title>
        <authorList>
            <person name="Hofmann H."/>
            <person name="Pyrc K."/>
            <person name="van der Hoek L."/>
            <person name="Geier M."/>
            <person name="Berkhout B."/>
            <person name="Poehlmann S."/>
        </authorList>
    </citation>
    <scope>FUNCTION</scope>
    <scope>INTERACTION WITH HUMAN ACE2</scope>
</reference>
<reference key="7">
    <citation type="journal article" date="2018" name="J. Virol.">
        <title>Entry of Human Coronavirus NL63 into the Cell.</title>
        <authorList>
            <person name="Milewska A."/>
            <person name="Nowak P."/>
            <person name="Owczarek K."/>
            <person name="Szczepanski A."/>
            <person name="Zarebski M."/>
            <person name="Hoang A."/>
            <person name="Berniak K."/>
            <person name="Wojarski J."/>
            <person name="Zeglen S."/>
            <person name="Baster Z."/>
            <person name="Rajfur Z."/>
            <person name="Pyrc K."/>
        </authorList>
    </citation>
    <scope>FUNCTION</scope>
</reference>
<reference evidence="8" key="8">
    <citation type="journal article" date="2006" name="Biochemistry">
        <title>Core structure of S2 from the human coronavirus NL63 spike glycoprotein.</title>
        <authorList>
            <person name="Zheng Q."/>
            <person name="Deng Y."/>
            <person name="Liu J."/>
            <person name="van der Hoek L."/>
            <person name="Berkhout B."/>
            <person name="Lu M."/>
        </authorList>
    </citation>
    <scope>X-RAY CRYSTALLOGRAPHY (1.75 ANGSTROMS) OF 981-1038 AND 1242-1283</scope>
</reference>
<reference evidence="9" key="9">
    <citation type="journal article" date="2009" name="Proc. Natl. Acad. Sci. U.S.A.">
        <title>Crystal structure of NL63 respiratory coronavirus receptor-binding domain complexed with its human receptor.</title>
        <authorList>
            <person name="Wu K."/>
            <person name="Li W."/>
            <person name="Peng G."/>
            <person name="Li F."/>
        </authorList>
    </citation>
    <scope>X-RAY CRYSTALLOGRAPHY (3.31 ANGSTROMS) OF 481-616</scope>
    <scope>GLYCOSYLATION AT ASN-486 AND ASN-512</scope>
    <scope>INTERACTION WITH HUMAN ACE2</scope>
    <scope>FUNCTION</scope>
    <scope>DISULFIDE BOND</scope>
</reference>
<reference evidence="10" key="10">
    <citation type="journal article" date="2016" name="Nat. Struct. Mol. Biol.">
        <title>Glycan shield and epitope masking of a coronavirus spike protein observed by cryo-electron microscopy.</title>
        <authorList>
            <person name="Walls A.C."/>
            <person name="Tortorici M.A."/>
            <person name="Frenz B."/>
            <person name="Snijder J."/>
            <person name="Li W."/>
            <person name="Rey F.A."/>
            <person name="DiMaio F."/>
            <person name="Bosch B.J."/>
            <person name="Veesler D."/>
        </authorList>
    </citation>
    <scope>STRUCTURE BY ELECTRON MICROSCOPY (3.40 ANGSTROMS) OF 16-1291</scope>
    <scope>DISULFIDE BOND</scope>
    <scope>GLYCOSYLATION AT ASN-35; ASN-52; ASN-98; ASN-155; ASN-187; ASN-193; ASN-240; ASN-276; ASN-301; ASN-330; ASN-354; ASN-358; ASN-403; ASN-426; ASN-486; ASN-506; ASN-512; ASN-626; ASN-645; ASN-666; ASN-699; ASN-723; ASN-749; ASN-762; ASN-768; ASN-1111; ASN-1196; ASN-1201; ASN-1218; ASN-1242; ASN-1247 AND ASN-1277</scope>
</reference>
<evidence type="ECO:0000255" key="1">
    <source>
        <dbReference type="HAMAP-Rule" id="MF_04200"/>
    </source>
</evidence>
<evidence type="ECO:0000255" key="2">
    <source>
        <dbReference type="PROSITE-ProRule" id="PRU01271"/>
    </source>
</evidence>
<evidence type="ECO:0000255" key="3">
    <source>
        <dbReference type="PROSITE-ProRule" id="PRU01272"/>
    </source>
</evidence>
<evidence type="ECO:0000269" key="4">
    <source>
    </source>
</evidence>
<evidence type="ECO:0000269" key="5">
    <source>
    </source>
</evidence>
<evidence type="ECO:0000269" key="6">
    <source>
    </source>
</evidence>
<evidence type="ECO:0000269" key="7">
    <source>
    </source>
</evidence>
<evidence type="ECO:0007744" key="8">
    <source>
        <dbReference type="PDB" id="2IEQ"/>
    </source>
</evidence>
<evidence type="ECO:0007744" key="9">
    <source>
        <dbReference type="PDB" id="3KBH"/>
    </source>
</evidence>
<evidence type="ECO:0007744" key="10">
    <source>
        <dbReference type="PDB" id="5SZS"/>
    </source>
</evidence>
<evidence type="ECO:0007829" key="11">
    <source>
        <dbReference type="PDB" id="2IEQ"/>
    </source>
</evidence>
<evidence type="ECO:0007829" key="12">
    <source>
        <dbReference type="PDB" id="5SZS"/>
    </source>
</evidence>
<evidence type="ECO:0007829" key="13">
    <source>
        <dbReference type="PDB" id="7FC3"/>
    </source>
</evidence>
<sequence>MKLFLILLVLPLASCFFTCNSNANLSMLQLGVPDNSSTIVTGLLPTHWFCANQSTSVYSANGFFYIDVGNHRSAFALHTGYYDANQYYIYVTNEIGLNASVTLKICKFSRNTTFDFLSNASSSFDCIVNLLFTEQLGAPLGITISGETVRLHLYNVTRTFYVPAAYKLTKLSVKCYFNYSCVFSVVNATVTVNVTTHNGRVVNYTVCDDCNGYTDNIFSVQQDGRIPNGFPFNNWFLLTNGSTLVDGVSRLYQPLRLTCLWPVPGLKSSTGFVYFNATGSDVNCNGYQHNSVVDVMRYNLNFSANSLDNLKSGVIVFKTLQYDVLFYCSNSSSGVLDTTIPFGPSSQPYYCFINSTINTTHVSTFVGILPPTVREIVVARTGQFYINGFKYFDLGFIEAVNFNVTTASATDFWTVAFATFVDVLVNVSATNIQNLLYCDSPFEKLQCEHLQFGLQDGFYSANFLDDNVLPETYVALPIYYQHTDINFTATASFGGSCYVCKPHQVNISLNGNTSVCVRTSHFSIRYIYNRVKSGSPGDSSWHIYLKSGTCPFSFSKLNNFQKFKTICFSTVEVPGSCNFPLEATWHYTSYTIVGALYVTWSEGNSITGVPYPVSGIREFSNLVLNNCTKYNIYDYVGTGIIRSSNQSLAGGITYVSNSGNLLGFKNVSTGNIFIVTPCNQPDQVAVYQQSIIGAMTAVNESRYGLQNLLQLPNFYYVSNGGNNCTTAVMTYSNFGICADGSLIPVRPRNSSDNGISAIITANLSIPSNWTTSVQVEYLQITSTPIVVDCATYVCNGNPRCKNLLKQYTSACKTIEDALRLSAHLETNDVSSMLTFDSNAFSLANVTSFGDYNLSSVLPQRNIRSSRIAGRSALEDLLFSKVVTSGLGTVDVDYKSCTKGLSIADLACAQYYNGIMVLPGVADAERMAMYTGSLIGGMVLGGLTSAAAIPFSLALQARLNYVALQTDVLQENQKILAASFNKAINNIVASFSSVNDAITQTAEAIHTVTIALNKIQDVVNQQGSALNHLTSQLRHNFQAISNSIQAIYDRLDSIQADQQVDRLITGRLAALNAFVSQVLNKYTEVRGSRRLAQQKINECVKSQSNRYGFCGNGTHIFSIVNSAPDGLLFLHTVLLPTDYKNVKAWSGICVDGIYGYVLRQPNLVLYSDNGVFRVTSRVMFQPRLPVLSDFVQIYNCNVTFVNISRVELHTVIPDYVDVNKTLQEFAQNLPKYVKPNFDLTPFNLTYLNLSSELKQLEAKTASLFQTTVELQGLIDQINSTYVDLKLLNRFENYIKWPWWVWLIISVVFVVLLSLLVFCCLSTGCCGCCNCLTSSMRGCCDCGSTKLPYYEFEKVHVQ</sequence>
<comment type="function">
    <text evidence="1 4 5 7">S1 region attaches the virion to the cell membrane by interacting with host ACE2, initiating the infection (PubMed:15897467, PubMed:19901337, PubMed:29142129). Binding to the receptor probably induces conformational changes in the S glycoprotein unmasking the fusion peptide and activating membranes fusion. S2 region belongs to the class I viral fusion protein. Under the current model, the protein has at least 3 conformational states: pre-fusion native state, pre-hairpin intermediate state, and post-fusion hairpin state. During viral and target cell membrane fusion, the coiled coil regions (heptad repeats) regions assume a trimer-of-hairpins structure, positioning the fusion peptide in close proximity to the C-terminal region of the ectodomain. The formation of this structure appears to drive apposition and subsequent fusion of viral and target cell membranes.</text>
</comment>
<comment type="subunit">
    <text evidence="1 4">Homotrimer. During virus morphogenesis, found in a complex with M proteins (By similarity). Interacts with host ACE2 (PubMed:15897467).</text>
</comment>
<comment type="interaction">
    <interactant intactId="EBI-15814420">
        <id>Q6Q1S2</id>
    </interactant>
    <interactant intactId="EBI-7730807">
        <id>Q9BYF1</id>
        <label>ACE2</label>
    </interactant>
    <organismsDiffer>true</organismsDiffer>
    <experiments>9</experiments>
</comment>
<comment type="interaction">
    <interactant intactId="EBI-15814420">
        <id>Q6Q1S2</id>
    </interactant>
    <interactant intactId="EBI-591818">
        <id>Q9UNP9</id>
        <label>PPIE</label>
    </interactant>
    <organismsDiffer>true</organismsDiffer>
    <experiments>2</experiments>
</comment>
<comment type="subcellular location">
    <subcellularLocation>
        <location evidence="1">Virion membrane</location>
        <topology evidence="1">Single-pass type I membrane protein</topology>
    </subcellularLocation>
    <subcellularLocation>
        <location evidence="1">Host endoplasmic reticulum-Golgi intermediate compartment membrane</location>
        <topology evidence="1">Single-pass type I membrane protein</topology>
    </subcellularLocation>
    <text evidence="1">Accumulates in the endoplasmic reticulum-Golgi intermediate compartment, where it participates in virus particle assembly.</text>
</comment>
<comment type="domain">
    <text evidence="1">The KxHxx motif seems to function as an ER retrieval signal.</text>
</comment>
<comment type="PTM">
    <text evidence="5 6">Glycosylated by host with heterogeneous N-linked glycans protruding from the trimer surface (PubMed:19901337, PubMed:27617430). Highly glycosylated by host, occluding many regions across the surface of the protein (PubMed:27617430).</text>
</comment>
<comment type="similarity">
    <text evidence="1">Belongs to the alphacoronaviruses spike protein family.</text>
</comment>
<comment type="caution">
    <text evidence="1">In contrast to beta- and gammacoronaviruses, S glycoprotein is not cleaved into S1 and S2.</text>
</comment>
<name>SPIKE_CVHNL</name>
<organismHost>
    <name type="scientific">Homo sapiens</name>
    <name type="common">Human</name>
    <dbReference type="NCBI Taxonomy" id="9606"/>
</organismHost>
<keyword id="KW-0002">3D-structure</keyword>
<keyword id="KW-0175">Coiled coil</keyword>
<keyword id="KW-1015">Disulfide bond</keyword>
<keyword id="KW-0325">Glycoprotein</keyword>
<keyword id="KW-1043">Host membrane</keyword>
<keyword id="KW-0945">Host-virus interaction</keyword>
<keyword id="KW-0472">Membrane</keyword>
<keyword id="KW-1185">Reference proteome</keyword>
<keyword id="KW-0732">Signal</keyword>
<keyword id="KW-0812">Transmembrane</keyword>
<keyword id="KW-1133">Transmembrane helix</keyword>
<keyword id="KW-1161">Viral attachment to host cell</keyword>
<keyword id="KW-0261">Viral envelope protein</keyword>
<keyword id="KW-0946">Virion</keyword>
<keyword id="KW-0843">Virulence</keyword>
<keyword id="KW-1160">Virus entry into host cell</keyword>
<accession>Q6Q1S2</accession>
<accession>Q5DIX7</accession>
<accession>Q5DIX8</accession>
<accession>Q5DIX9</accession>
<accession>Q5DIY0</accession>
<accession>Q6R1L7</accession>
<proteinExistence type="evidence at protein level"/>